<keyword id="KW-0878">Amphibian defense peptide</keyword>
<keyword id="KW-0044">Antibiotic</keyword>
<keyword id="KW-0929">Antimicrobial</keyword>
<keyword id="KW-0903">Direct protein sequencing</keyword>
<keyword id="KW-0391">Immunity</keyword>
<keyword id="KW-0399">Innate immunity</keyword>
<keyword id="KW-0964">Secreted</keyword>
<feature type="peptide" id="PRO_0000043801" description="Frenatin-4" evidence="1">
    <location>
        <begin position="1"/>
        <end position="24"/>
    </location>
</feature>
<name>FRE4_NYCIN</name>
<accession>P82023</accession>
<organism>
    <name type="scientific">Nyctimystes infrafrenatus</name>
    <name type="common">White-lipped tree frog</name>
    <name type="synonym">Litoria infrafrenata</name>
    <dbReference type="NCBI Taxonomy" id="61195"/>
    <lineage>
        <taxon>Eukaryota</taxon>
        <taxon>Metazoa</taxon>
        <taxon>Chordata</taxon>
        <taxon>Craniata</taxon>
        <taxon>Vertebrata</taxon>
        <taxon>Euteleostomi</taxon>
        <taxon>Amphibia</taxon>
        <taxon>Batrachia</taxon>
        <taxon>Anura</taxon>
        <taxon>Neobatrachia</taxon>
        <taxon>Hyloidea</taxon>
        <taxon>Hylidae</taxon>
        <taxon>Pelodryadinae</taxon>
        <taxon>Nyctimystes</taxon>
    </lineage>
</organism>
<proteinExistence type="evidence at protein level"/>
<evidence type="ECO:0000269" key="1">
    <source>
    </source>
</evidence>
<evidence type="ECO:0000303" key="2">
    <source>
    </source>
</evidence>
<evidence type="ECO:0000305" key="3"/>
<evidence type="ECO:0000305" key="4">
    <source>
    </source>
</evidence>
<reference key="1">
    <citation type="journal article" date="1996" name="J. Pept. Sci.">
        <title>The structures of the frenatin peptides from the skin secretion of the giant tree frog Litoria infrafrenata.</title>
        <authorList>
            <person name="Raftery M.J."/>
            <person name="Waugh R.J."/>
            <person name="Bowie J.H."/>
            <person name="Wallace J.C."/>
            <person name="Tyler M.J."/>
        </authorList>
    </citation>
    <scope>PROTEIN SEQUENCE</scope>
    <scope>FUNCTION</scope>
    <scope>MASS SPECTROMETRY</scope>
    <scope>SUBCELLULAR LOCATION</scope>
    <source>
        <tissue>Skin secretion</tissue>
    </source>
</reference>
<dbReference type="GO" id="GO:0005576">
    <property type="term" value="C:extracellular region"/>
    <property type="evidence" value="ECO:0007669"/>
    <property type="project" value="UniProtKB-SubCell"/>
</dbReference>
<dbReference type="GO" id="GO:0042742">
    <property type="term" value="P:defense response to bacterium"/>
    <property type="evidence" value="ECO:0007669"/>
    <property type="project" value="UniProtKB-KW"/>
</dbReference>
<dbReference type="GO" id="GO:0045087">
    <property type="term" value="P:innate immune response"/>
    <property type="evidence" value="ECO:0007669"/>
    <property type="project" value="UniProtKB-KW"/>
</dbReference>
<protein>
    <recommendedName>
        <fullName evidence="2">Frenatin-4</fullName>
    </recommendedName>
</protein>
<sequence length="24" mass="2495">GFLDKLKKGASDFANALVNSIKGT</sequence>
<comment type="function">
    <text evidence="1">Very weak antimicrobial peptide since it does not show activity below 100 ug/ml against Bacillus cereus, Escherichia coli, Leuconostoc mesenteroides, Micrococcus luteus, Pastewella haemolytica, Staphylococcus aureus, Streptococcus faecalis and Streptococcus uberis.</text>
</comment>
<comment type="subcellular location">
    <subcellularLocation>
        <location evidence="1">Secreted</location>
    </subcellularLocation>
</comment>
<comment type="tissue specificity">
    <text evidence="4">Expressed by the skin glands.</text>
</comment>
<comment type="mass spectrometry" mass="2493.0" method="FAB" evidence="1"/>
<comment type="similarity">
    <text evidence="3">Belongs to the frog skin active peptide (FSAP) family. Frenatin subfamily.</text>
</comment>